<gene>
    <name type="ordered locus">At1g28590</name>
    <name type="ORF">F1K23.17</name>
</gene>
<name>GDL8_ARATH</name>
<accession>Q8RXT9</accession>
<accession>Q9FXJ3</accession>
<sequence length="403" mass="44811">MASLDSLPAMKLVRFILSTLLVTSVNSQTQCRNFKSIISFGDSIADTGNLLGLSDPNDLPASAFPPYGETFFHHPTGRYSDGRLIIDFIAEFLGFPLVPPFYGCQNANFKKGVNFAVAGATALEPSFLEERGIHSTITNVSLSVQLRSFTESLPNLCGSPSDCRDMIENALILMGEIGGNDYNFALFQRKPVKEVEELVPFVIATISSAITELVCMGGRTFLVPGNFPIGYSASYLTLYKTSNKEEYDPLTGCLKWLNDFSEYYNKQLQEELNGLRKLYPHVNIIYADYYNALLRLFQEPAKFGFMNRPLPACCGVGGSYNFNFSRRCGSVGVEYCDDPSQYVNYDGIHMTEAAYRLISEGLLKGPYAIPPFKWSCLSSEIMNKMSLDTQILDEQLLQGCLKV</sequence>
<proteinExistence type="evidence at transcript level"/>
<evidence type="ECO:0000250" key="1"/>
<evidence type="ECO:0000255" key="2"/>
<evidence type="ECO:0000305" key="3"/>
<keyword id="KW-0325">Glycoprotein</keyword>
<keyword id="KW-0378">Hydrolase</keyword>
<keyword id="KW-0442">Lipid degradation</keyword>
<keyword id="KW-0443">Lipid metabolism</keyword>
<keyword id="KW-1185">Reference proteome</keyword>
<keyword id="KW-0964">Secreted</keyword>
<keyword id="KW-0732">Signal</keyword>
<dbReference type="EC" id="3.1.1.-"/>
<dbReference type="EMBL" id="AC007508">
    <property type="protein sequence ID" value="AAF24548.2"/>
    <property type="status" value="ALT_SEQ"/>
    <property type="molecule type" value="Genomic_DNA"/>
</dbReference>
<dbReference type="EMBL" id="CP002684">
    <property type="protein sequence ID" value="AEE30998.1"/>
    <property type="molecule type" value="Genomic_DNA"/>
</dbReference>
<dbReference type="EMBL" id="AY080675">
    <property type="protein sequence ID" value="AAL86351.1"/>
    <property type="molecule type" value="mRNA"/>
</dbReference>
<dbReference type="RefSeq" id="NP_174181.1">
    <property type="nucleotide sequence ID" value="NM_102627.3"/>
</dbReference>
<dbReference type="SMR" id="Q8RXT9"/>
<dbReference type="FunCoup" id="Q8RXT9">
    <property type="interactions" value="112"/>
</dbReference>
<dbReference type="STRING" id="3702.Q8RXT9"/>
<dbReference type="GlyGen" id="Q8RXT9">
    <property type="glycosylation" value="2 sites"/>
</dbReference>
<dbReference type="PaxDb" id="3702-AT1G28590.1"/>
<dbReference type="ProteomicsDB" id="221996"/>
<dbReference type="EnsemblPlants" id="AT1G28590.1">
    <property type="protein sequence ID" value="AT1G28590.1"/>
    <property type="gene ID" value="AT1G28590"/>
</dbReference>
<dbReference type="GeneID" id="839759"/>
<dbReference type="Gramene" id="AT1G28590.1">
    <property type="protein sequence ID" value="AT1G28590.1"/>
    <property type="gene ID" value="AT1G28590"/>
</dbReference>
<dbReference type="KEGG" id="ath:AT1G28590"/>
<dbReference type="Araport" id="AT1G28590"/>
<dbReference type="TAIR" id="AT1G28590"/>
<dbReference type="eggNOG" id="ENOG502QSMM">
    <property type="taxonomic scope" value="Eukaryota"/>
</dbReference>
<dbReference type="HOGENOM" id="CLU_015101_2_1_1"/>
<dbReference type="InParanoid" id="Q8RXT9"/>
<dbReference type="OMA" id="GVEYCDD"/>
<dbReference type="PhylomeDB" id="Q8RXT9"/>
<dbReference type="BioCyc" id="ARA:AT1G28590-MONOMER"/>
<dbReference type="PRO" id="PR:Q8RXT9"/>
<dbReference type="Proteomes" id="UP000006548">
    <property type="component" value="Chromosome 1"/>
</dbReference>
<dbReference type="ExpressionAtlas" id="Q8RXT9">
    <property type="expression patterns" value="baseline and differential"/>
</dbReference>
<dbReference type="GO" id="GO:0005576">
    <property type="term" value="C:extracellular region"/>
    <property type="evidence" value="ECO:0007669"/>
    <property type="project" value="UniProtKB-SubCell"/>
</dbReference>
<dbReference type="GO" id="GO:0016788">
    <property type="term" value="F:hydrolase activity, acting on ester bonds"/>
    <property type="evidence" value="ECO:0007669"/>
    <property type="project" value="InterPro"/>
</dbReference>
<dbReference type="GO" id="GO:0016042">
    <property type="term" value="P:lipid catabolic process"/>
    <property type="evidence" value="ECO:0007669"/>
    <property type="project" value="UniProtKB-KW"/>
</dbReference>
<dbReference type="CDD" id="cd01837">
    <property type="entry name" value="SGNH_plant_lipase_like"/>
    <property type="match status" value="1"/>
</dbReference>
<dbReference type="Gene3D" id="3.40.50.1110">
    <property type="entry name" value="SGNH hydrolase"/>
    <property type="match status" value="1"/>
</dbReference>
<dbReference type="InterPro" id="IPR001087">
    <property type="entry name" value="GDSL"/>
</dbReference>
<dbReference type="InterPro" id="IPR036514">
    <property type="entry name" value="SGNH_hydro_sf"/>
</dbReference>
<dbReference type="InterPro" id="IPR035669">
    <property type="entry name" value="SGNH_plant_lipase-like"/>
</dbReference>
<dbReference type="PANTHER" id="PTHR22835:SF678">
    <property type="entry name" value="SINAPINE ESTERASE"/>
    <property type="match status" value="1"/>
</dbReference>
<dbReference type="PANTHER" id="PTHR22835">
    <property type="entry name" value="ZINC FINGER FYVE DOMAIN CONTAINING PROTEIN"/>
    <property type="match status" value="1"/>
</dbReference>
<dbReference type="Pfam" id="PF00657">
    <property type="entry name" value="Lipase_GDSL"/>
    <property type="match status" value="1"/>
</dbReference>
<dbReference type="SUPFAM" id="SSF52266">
    <property type="entry name" value="SGNH hydrolase"/>
    <property type="match status" value="1"/>
</dbReference>
<feature type="signal peptide" evidence="2">
    <location>
        <begin position="1"/>
        <end position="27"/>
    </location>
</feature>
<feature type="chain" id="PRO_0000367350" description="GDSL esterase/lipase At1g28590">
    <location>
        <begin position="28"/>
        <end position="403"/>
    </location>
</feature>
<feature type="active site" description="Nucleophile" evidence="1">
    <location>
        <position position="43"/>
    </location>
</feature>
<feature type="active site" evidence="1">
    <location>
        <position position="346"/>
    </location>
</feature>
<feature type="active site" evidence="1">
    <location>
        <position position="349"/>
    </location>
</feature>
<feature type="glycosylation site" description="N-linked (GlcNAc...) asparagine" evidence="2">
    <location>
        <position position="139"/>
    </location>
</feature>
<feature type="glycosylation site" description="N-linked (GlcNAc...) asparagine" evidence="2">
    <location>
        <position position="323"/>
    </location>
</feature>
<protein>
    <recommendedName>
        <fullName>GDSL esterase/lipase At1g28590</fullName>
        <ecNumber>3.1.1.-</ecNumber>
    </recommendedName>
    <alternativeName>
        <fullName>Extracellular lipase At1g28590</fullName>
    </alternativeName>
</protein>
<organism>
    <name type="scientific">Arabidopsis thaliana</name>
    <name type="common">Mouse-ear cress</name>
    <dbReference type="NCBI Taxonomy" id="3702"/>
    <lineage>
        <taxon>Eukaryota</taxon>
        <taxon>Viridiplantae</taxon>
        <taxon>Streptophyta</taxon>
        <taxon>Embryophyta</taxon>
        <taxon>Tracheophyta</taxon>
        <taxon>Spermatophyta</taxon>
        <taxon>Magnoliopsida</taxon>
        <taxon>eudicotyledons</taxon>
        <taxon>Gunneridae</taxon>
        <taxon>Pentapetalae</taxon>
        <taxon>rosids</taxon>
        <taxon>malvids</taxon>
        <taxon>Brassicales</taxon>
        <taxon>Brassicaceae</taxon>
        <taxon>Camelineae</taxon>
        <taxon>Arabidopsis</taxon>
    </lineage>
</organism>
<reference key="1">
    <citation type="journal article" date="2000" name="Nature">
        <title>Sequence and analysis of chromosome 1 of the plant Arabidopsis thaliana.</title>
        <authorList>
            <person name="Theologis A."/>
            <person name="Ecker J.R."/>
            <person name="Palm C.J."/>
            <person name="Federspiel N.A."/>
            <person name="Kaul S."/>
            <person name="White O."/>
            <person name="Alonso J."/>
            <person name="Altafi H."/>
            <person name="Araujo R."/>
            <person name="Bowman C.L."/>
            <person name="Brooks S.Y."/>
            <person name="Buehler E."/>
            <person name="Chan A."/>
            <person name="Chao Q."/>
            <person name="Chen H."/>
            <person name="Cheuk R.F."/>
            <person name="Chin C.W."/>
            <person name="Chung M.K."/>
            <person name="Conn L."/>
            <person name="Conway A.B."/>
            <person name="Conway A.R."/>
            <person name="Creasy T.H."/>
            <person name="Dewar K."/>
            <person name="Dunn P."/>
            <person name="Etgu P."/>
            <person name="Feldblyum T.V."/>
            <person name="Feng J.-D."/>
            <person name="Fong B."/>
            <person name="Fujii C.Y."/>
            <person name="Gill J.E."/>
            <person name="Goldsmith A.D."/>
            <person name="Haas B."/>
            <person name="Hansen N.F."/>
            <person name="Hughes B."/>
            <person name="Huizar L."/>
            <person name="Hunter J.L."/>
            <person name="Jenkins J."/>
            <person name="Johnson-Hopson C."/>
            <person name="Khan S."/>
            <person name="Khaykin E."/>
            <person name="Kim C.J."/>
            <person name="Koo H.L."/>
            <person name="Kremenetskaia I."/>
            <person name="Kurtz D.B."/>
            <person name="Kwan A."/>
            <person name="Lam B."/>
            <person name="Langin-Hooper S."/>
            <person name="Lee A."/>
            <person name="Lee J.M."/>
            <person name="Lenz C.A."/>
            <person name="Li J.H."/>
            <person name="Li Y.-P."/>
            <person name="Lin X."/>
            <person name="Liu S.X."/>
            <person name="Liu Z.A."/>
            <person name="Luros J.S."/>
            <person name="Maiti R."/>
            <person name="Marziali A."/>
            <person name="Militscher J."/>
            <person name="Miranda M."/>
            <person name="Nguyen M."/>
            <person name="Nierman W.C."/>
            <person name="Osborne B.I."/>
            <person name="Pai G."/>
            <person name="Peterson J."/>
            <person name="Pham P.K."/>
            <person name="Rizzo M."/>
            <person name="Rooney T."/>
            <person name="Rowley D."/>
            <person name="Sakano H."/>
            <person name="Salzberg S.L."/>
            <person name="Schwartz J.R."/>
            <person name="Shinn P."/>
            <person name="Southwick A.M."/>
            <person name="Sun H."/>
            <person name="Tallon L.J."/>
            <person name="Tambunga G."/>
            <person name="Toriumi M.J."/>
            <person name="Town C.D."/>
            <person name="Utterback T."/>
            <person name="Van Aken S."/>
            <person name="Vaysberg M."/>
            <person name="Vysotskaia V.S."/>
            <person name="Walker M."/>
            <person name="Wu D."/>
            <person name="Yu G."/>
            <person name="Fraser C.M."/>
            <person name="Venter J.C."/>
            <person name="Davis R.W."/>
        </authorList>
    </citation>
    <scope>NUCLEOTIDE SEQUENCE [LARGE SCALE GENOMIC DNA]</scope>
    <source>
        <strain>cv. Columbia</strain>
    </source>
</reference>
<reference key="2">
    <citation type="journal article" date="2017" name="Plant J.">
        <title>Araport11: a complete reannotation of the Arabidopsis thaliana reference genome.</title>
        <authorList>
            <person name="Cheng C.Y."/>
            <person name="Krishnakumar V."/>
            <person name="Chan A.P."/>
            <person name="Thibaud-Nissen F."/>
            <person name="Schobel S."/>
            <person name="Town C.D."/>
        </authorList>
    </citation>
    <scope>GENOME REANNOTATION</scope>
    <source>
        <strain>cv. Columbia</strain>
    </source>
</reference>
<reference key="3">
    <citation type="journal article" date="2003" name="Science">
        <title>Empirical analysis of transcriptional activity in the Arabidopsis genome.</title>
        <authorList>
            <person name="Yamada K."/>
            <person name="Lim J."/>
            <person name="Dale J.M."/>
            <person name="Chen H."/>
            <person name="Shinn P."/>
            <person name="Palm C.J."/>
            <person name="Southwick A.M."/>
            <person name="Wu H.C."/>
            <person name="Kim C.J."/>
            <person name="Nguyen M."/>
            <person name="Pham P.K."/>
            <person name="Cheuk R.F."/>
            <person name="Karlin-Newmann G."/>
            <person name="Liu S.X."/>
            <person name="Lam B."/>
            <person name="Sakano H."/>
            <person name="Wu T."/>
            <person name="Yu G."/>
            <person name="Miranda M."/>
            <person name="Quach H.L."/>
            <person name="Tripp M."/>
            <person name="Chang C.H."/>
            <person name="Lee J.M."/>
            <person name="Toriumi M.J."/>
            <person name="Chan M.M."/>
            <person name="Tang C.C."/>
            <person name="Onodera C.S."/>
            <person name="Deng J.M."/>
            <person name="Akiyama K."/>
            <person name="Ansari Y."/>
            <person name="Arakawa T."/>
            <person name="Banh J."/>
            <person name="Banno F."/>
            <person name="Bowser L."/>
            <person name="Brooks S.Y."/>
            <person name="Carninci P."/>
            <person name="Chao Q."/>
            <person name="Choy N."/>
            <person name="Enju A."/>
            <person name="Goldsmith A.D."/>
            <person name="Gurjal M."/>
            <person name="Hansen N.F."/>
            <person name="Hayashizaki Y."/>
            <person name="Johnson-Hopson C."/>
            <person name="Hsuan V.W."/>
            <person name="Iida K."/>
            <person name="Karnes M."/>
            <person name="Khan S."/>
            <person name="Koesema E."/>
            <person name="Ishida J."/>
            <person name="Jiang P.X."/>
            <person name="Jones T."/>
            <person name="Kawai J."/>
            <person name="Kamiya A."/>
            <person name="Meyers C."/>
            <person name="Nakajima M."/>
            <person name="Narusaka M."/>
            <person name="Seki M."/>
            <person name="Sakurai T."/>
            <person name="Satou M."/>
            <person name="Tamse R."/>
            <person name="Vaysberg M."/>
            <person name="Wallender E.K."/>
            <person name="Wong C."/>
            <person name="Yamamura Y."/>
            <person name="Yuan S."/>
            <person name="Shinozaki K."/>
            <person name="Davis R.W."/>
            <person name="Theologis A."/>
            <person name="Ecker J.R."/>
        </authorList>
    </citation>
    <scope>NUCLEOTIDE SEQUENCE [LARGE SCALE MRNA] OF 161-403</scope>
    <source>
        <strain>cv. Columbia</strain>
    </source>
</reference>
<reference key="4">
    <citation type="journal article" date="2004" name="Prog. Lipid Res.">
        <title>GDSL family of serine esterases/lipases.</title>
        <authorList>
            <person name="Akoh C.C."/>
            <person name="Lee G.-C."/>
            <person name="Liaw Y.-C."/>
            <person name="Huang T.-H."/>
            <person name="Shaw J.-F."/>
        </authorList>
    </citation>
    <scope>REVIEW</scope>
</reference>
<reference key="5">
    <citation type="journal article" date="2008" name="Pak. J. Biol. Sci.">
        <title>Sequence analysis of GDSL lipase gene family in Arabidopsis thaliana.</title>
        <authorList>
            <person name="Ling H."/>
        </authorList>
    </citation>
    <scope>GENE FAMILY</scope>
</reference>
<comment type="subcellular location">
    <subcellularLocation>
        <location evidence="3">Secreted</location>
    </subcellularLocation>
</comment>
<comment type="similarity">
    <text evidence="3">Belongs to the 'GDSL' lipolytic enzyme family.</text>
</comment>
<comment type="sequence caution" evidence="3">
    <conflict type="erroneous gene model prediction">
        <sequence resource="EMBL-CDS" id="AAF24548"/>
    </conflict>
    <text>The predicted gene At1g28590 has been split into 2 genes: At1g28590 and At1g28600.</text>
</comment>